<dbReference type="EMBL" id="AY596203">
    <property type="protein sequence ID" value="AAU06324.1"/>
    <property type="molecule type" value="mRNA"/>
</dbReference>
<dbReference type="EMBL" id="AY360472">
    <property type="protein sequence ID" value="AAQ64010.1"/>
    <property type="molecule type" value="mRNA"/>
</dbReference>
<dbReference type="EMBL" id="AK145425">
    <property type="protein sequence ID" value="BAE26430.1"/>
    <property type="molecule type" value="mRNA"/>
</dbReference>
<dbReference type="CCDS" id="CCDS39843.1">
    <molecule id="Q66X01-1"/>
</dbReference>
<dbReference type="RefSeq" id="NP_001036077.1">
    <molecule id="Q66X01-1"/>
    <property type="nucleotide sequence ID" value="NM_001042612.2"/>
</dbReference>
<dbReference type="SMR" id="Q66X01"/>
<dbReference type="FunCoup" id="Q66X01">
    <property type="interactions" value="114"/>
</dbReference>
<dbReference type="STRING" id="10090.ENSMUSP00000083106"/>
<dbReference type="jPOST" id="Q66X01"/>
<dbReference type="PaxDb" id="10090-ENSMUSP00000083106"/>
<dbReference type="ProteomicsDB" id="253081">
    <molecule id="Q66X01-1"/>
</dbReference>
<dbReference type="ProteomicsDB" id="253082">
    <molecule id="Q66X01-2"/>
</dbReference>
<dbReference type="DNASU" id="330490"/>
<dbReference type="Ensembl" id="ENSMUST00000041845.14">
    <molecule id="Q66X01-2"/>
    <property type="protein sequence ID" value="ENSMUSP00000036041.8"/>
    <property type="gene ID" value="ENSMUSG00000040614.15"/>
</dbReference>
<dbReference type="Ensembl" id="ENSMUST00000085944.6">
    <molecule id="Q66X01-1"/>
    <property type="protein sequence ID" value="ENSMUSP00000083106.6"/>
    <property type="gene ID" value="ENSMUSG00000040614.15"/>
</dbReference>
<dbReference type="GeneID" id="330490"/>
<dbReference type="KEGG" id="mmu:330490"/>
<dbReference type="UCSC" id="uc009fuj.1">
    <molecule id="Q66X01-1"/>
    <property type="organism name" value="mouse"/>
</dbReference>
<dbReference type="UCSC" id="uc012fgb.2">
    <molecule id="Q66X01-2"/>
    <property type="organism name" value="mouse"/>
</dbReference>
<dbReference type="AGR" id="MGI:3028627"/>
<dbReference type="CTD" id="330490"/>
<dbReference type="MGI" id="MGI:3028627">
    <property type="gene designation" value="Nlrp9c"/>
</dbReference>
<dbReference type="VEuPathDB" id="HostDB:ENSMUSG00000040614"/>
<dbReference type="eggNOG" id="KOG4308">
    <property type="taxonomic scope" value="Eukaryota"/>
</dbReference>
<dbReference type="GeneTree" id="ENSGT00940000163218"/>
<dbReference type="HOGENOM" id="CLU_002274_2_1_1"/>
<dbReference type="InParanoid" id="Q66X01"/>
<dbReference type="OrthoDB" id="120976at2759"/>
<dbReference type="PhylomeDB" id="Q66X01"/>
<dbReference type="BioGRID-ORCS" id="330490">
    <property type="hits" value="2 hits in 76 CRISPR screens"/>
</dbReference>
<dbReference type="PRO" id="PR:Q66X01"/>
<dbReference type="Proteomes" id="UP000000589">
    <property type="component" value="Chromosome 7"/>
</dbReference>
<dbReference type="RNAct" id="Q66X01">
    <property type="molecule type" value="protein"/>
</dbReference>
<dbReference type="Bgee" id="ENSMUSG00000040614">
    <property type="expression patterns" value="Expressed in animal zygote and 9 other cell types or tissues"/>
</dbReference>
<dbReference type="GO" id="GO:0005737">
    <property type="term" value="C:cytoplasm"/>
    <property type="evidence" value="ECO:0007669"/>
    <property type="project" value="UniProtKB-SubCell"/>
</dbReference>
<dbReference type="GO" id="GO:0005524">
    <property type="term" value="F:ATP binding"/>
    <property type="evidence" value="ECO:0007669"/>
    <property type="project" value="UniProtKB-KW"/>
</dbReference>
<dbReference type="GO" id="GO:0001824">
    <property type="term" value="P:blastocyst development"/>
    <property type="evidence" value="ECO:0000316"/>
    <property type="project" value="MGI"/>
</dbReference>
<dbReference type="GO" id="GO:0006954">
    <property type="term" value="P:inflammatory response"/>
    <property type="evidence" value="ECO:0007669"/>
    <property type="project" value="UniProtKB-KW"/>
</dbReference>
<dbReference type="GO" id="GO:0045087">
    <property type="term" value="P:innate immune response"/>
    <property type="evidence" value="ECO:0007669"/>
    <property type="project" value="UniProtKB-KW"/>
</dbReference>
<dbReference type="CDD" id="cd08320">
    <property type="entry name" value="Pyrin_NALPs"/>
    <property type="match status" value="1"/>
</dbReference>
<dbReference type="Gene3D" id="3.40.50.300">
    <property type="entry name" value="P-loop containing nucleotide triphosphate hydrolases"/>
    <property type="match status" value="1"/>
</dbReference>
<dbReference type="Gene3D" id="3.80.10.10">
    <property type="entry name" value="Ribonuclease Inhibitor"/>
    <property type="match status" value="1"/>
</dbReference>
<dbReference type="InterPro" id="IPR004020">
    <property type="entry name" value="DAPIN"/>
</dbReference>
<dbReference type="InterPro" id="IPR011029">
    <property type="entry name" value="DEATH-like_dom_sf"/>
</dbReference>
<dbReference type="InterPro" id="IPR001611">
    <property type="entry name" value="Leu-rich_rpt"/>
</dbReference>
<dbReference type="InterPro" id="IPR032675">
    <property type="entry name" value="LRR_dom_sf"/>
</dbReference>
<dbReference type="InterPro" id="IPR007111">
    <property type="entry name" value="NACHT_NTPase"/>
</dbReference>
<dbReference type="InterPro" id="IPR041267">
    <property type="entry name" value="NLRP_HD2"/>
</dbReference>
<dbReference type="InterPro" id="IPR050637">
    <property type="entry name" value="NLRP_innate_immun_reg"/>
</dbReference>
<dbReference type="InterPro" id="IPR041075">
    <property type="entry name" value="NOD1/2_WH"/>
</dbReference>
<dbReference type="InterPro" id="IPR027417">
    <property type="entry name" value="P-loop_NTPase"/>
</dbReference>
<dbReference type="PANTHER" id="PTHR45690">
    <property type="entry name" value="NACHT, LRR AND PYD DOMAINS-CONTAINING PROTEIN 12"/>
    <property type="match status" value="1"/>
</dbReference>
<dbReference type="PANTHER" id="PTHR45690:SF13">
    <property type="entry name" value="NACHT, LRR AND PYD DOMAINS-CONTAINING PROTEIN 9"/>
    <property type="match status" value="1"/>
</dbReference>
<dbReference type="Pfam" id="PF13516">
    <property type="entry name" value="LRR_6"/>
    <property type="match status" value="2"/>
</dbReference>
<dbReference type="Pfam" id="PF05729">
    <property type="entry name" value="NACHT"/>
    <property type="match status" value="1"/>
</dbReference>
<dbReference type="Pfam" id="PF17776">
    <property type="entry name" value="NLRC4_HD2"/>
    <property type="match status" value="1"/>
</dbReference>
<dbReference type="Pfam" id="PF17779">
    <property type="entry name" value="NOD2_WH"/>
    <property type="match status" value="1"/>
</dbReference>
<dbReference type="Pfam" id="PF02758">
    <property type="entry name" value="PYRIN"/>
    <property type="match status" value="1"/>
</dbReference>
<dbReference type="SMART" id="SM00368">
    <property type="entry name" value="LRR_RI"/>
    <property type="match status" value="8"/>
</dbReference>
<dbReference type="SMART" id="SM01289">
    <property type="entry name" value="PYRIN"/>
    <property type="match status" value="1"/>
</dbReference>
<dbReference type="SUPFAM" id="SSF47986">
    <property type="entry name" value="DEATH domain"/>
    <property type="match status" value="1"/>
</dbReference>
<dbReference type="SUPFAM" id="SSF52540">
    <property type="entry name" value="P-loop containing nucleoside triphosphate hydrolases"/>
    <property type="match status" value="1"/>
</dbReference>
<dbReference type="SUPFAM" id="SSF52047">
    <property type="entry name" value="RNI-like"/>
    <property type="match status" value="1"/>
</dbReference>
<dbReference type="PROSITE" id="PS50824">
    <property type="entry name" value="DAPIN"/>
    <property type="match status" value="1"/>
</dbReference>
<dbReference type="PROSITE" id="PS50837">
    <property type="entry name" value="NACHT"/>
    <property type="match status" value="1"/>
</dbReference>
<reference key="1">
    <citation type="journal article" date="2004" name="Hum. Mol. Genet.">
        <title>Age-associated alteration of gene expression patterns in mouse oocytes.</title>
        <authorList>
            <person name="Hamatani T."/>
            <person name="Falco G."/>
            <person name="Carter M.G."/>
            <person name="Akutsu H."/>
            <person name="Stagg C.A."/>
            <person name="Sharov A.A."/>
            <person name="Dudekula D.B."/>
            <person name="VanBuren V."/>
            <person name="Ko M.S.H."/>
        </authorList>
    </citation>
    <scope>NUCLEOTIDE SEQUENCE [MRNA] (ISOFORM 1)</scope>
    <scope>TISSUE SPECIFICITY</scope>
    <source>
        <strain>C57BL/6J</strain>
    </source>
</reference>
<reference key="2">
    <citation type="submission" date="2003-08" db="EMBL/GenBank/DDBJ databases">
        <title>Murine NALPs: a family of proteins involved in inflammation.</title>
        <authorList>
            <person name="Martinon F."/>
            <person name="Hofmann K."/>
            <person name="Tschopp J."/>
        </authorList>
    </citation>
    <scope>NUCLEOTIDE SEQUENCE [MRNA] (ISOFORM 2)</scope>
    <source>
        <strain>C57BL/6J</strain>
    </source>
</reference>
<reference key="3">
    <citation type="journal article" date="2005" name="Science">
        <title>The transcriptional landscape of the mammalian genome.</title>
        <authorList>
            <person name="Carninci P."/>
            <person name="Kasukawa T."/>
            <person name="Katayama S."/>
            <person name="Gough J."/>
            <person name="Frith M.C."/>
            <person name="Maeda N."/>
            <person name="Oyama R."/>
            <person name="Ravasi T."/>
            <person name="Lenhard B."/>
            <person name="Wells C."/>
            <person name="Kodzius R."/>
            <person name="Shimokawa K."/>
            <person name="Bajic V.B."/>
            <person name="Brenner S.E."/>
            <person name="Batalov S."/>
            <person name="Forrest A.R."/>
            <person name="Zavolan M."/>
            <person name="Davis M.J."/>
            <person name="Wilming L.G."/>
            <person name="Aidinis V."/>
            <person name="Allen J.E."/>
            <person name="Ambesi-Impiombato A."/>
            <person name="Apweiler R."/>
            <person name="Aturaliya R.N."/>
            <person name="Bailey T.L."/>
            <person name="Bansal M."/>
            <person name="Baxter L."/>
            <person name="Beisel K.W."/>
            <person name="Bersano T."/>
            <person name="Bono H."/>
            <person name="Chalk A.M."/>
            <person name="Chiu K.P."/>
            <person name="Choudhary V."/>
            <person name="Christoffels A."/>
            <person name="Clutterbuck D.R."/>
            <person name="Crowe M.L."/>
            <person name="Dalla E."/>
            <person name="Dalrymple B.P."/>
            <person name="de Bono B."/>
            <person name="Della Gatta G."/>
            <person name="di Bernardo D."/>
            <person name="Down T."/>
            <person name="Engstrom P."/>
            <person name="Fagiolini M."/>
            <person name="Faulkner G."/>
            <person name="Fletcher C.F."/>
            <person name="Fukushima T."/>
            <person name="Furuno M."/>
            <person name="Futaki S."/>
            <person name="Gariboldi M."/>
            <person name="Georgii-Hemming P."/>
            <person name="Gingeras T.R."/>
            <person name="Gojobori T."/>
            <person name="Green R.E."/>
            <person name="Gustincich S."/>
            <person name="Harbers M."/>
            <person name="Hayashi Y."/>
            <person name="Hensch T.K."/>
            <person name="Hirokawa N."/>
            <person name="Hill D."/>
            <person name="Huminiecki L."/>
            <person name="Iacono M."/>
            <person name="Ikeo K."/>
            <person name="Iwama A."/>
            <person name="Ishikawa T."/>
            <person name="Jakt M."/>
            <person name="Kanapin A."/>
            <person name="Katoh M."/>
            <person name="Kawasawa Y."/>
            <person name="Kelso J."/>
            <person name="Kitamura H."/>
            <person name="Kitano H."/>
            <person name="Kollias G."/>
            <person name="Krishnan S.P."/>
            <person name="Kruger A."/>
            <person name="Kummerfeld S.K."/>
            <person name="Kurochkin I.V."/>
            <person name="Lareau L.F."/>
            <person name="Lazarevic D."/>
            <person name="Lipovich L."/>
            <person name="Liu J."/>
            <person name="Liuni S."/>
            <person name="McWilliam S."/>
            <person name="Madan Babu M."/>
            <person name="Madera M."/>
            <person name="Marchionni L."/>
            <person name="Matsuda H."/>
            <person name="Matsuzawa S."/>
            <person name="Miki H."/>
            <person name="Mignone F."/>
            <person name="Miyake S."/>
            <person name="Morris K."/>
            <person name="Mottagui-Tabar S."/>
            <person name="Mulder N."/>
            <person name="Nakano N."/>
            <person name="Nakauchi H."/>
            <person name="Ng P."/>
            <person name="Nilsson R."/>
            <person name="Nishiguchi S."/>
            <person name="Nishikawa S."/>
            <person name="Nori F."/>
            <person name="Ohara O."/>
            <person name="Okazaki Y."/>
            <person name="Orlando V."/>
            <person name="Pang K.C."/>
            <person name="Pavan W.J."/>
            <person name="Pavesi G."/>
            <person name="Pesole G."/>
            <person name="Petrovsky N."/>
            <person name="Piazza S."/>
            <person name="Reed J."/>
            <person name="Reid J.F."/>
            <person name="Ring B.Z."/>
            <person name="Ringwald M."/>
            <person name="Rost B."/>
            <person name="Ruan Y."/>
            <person name="Salzberg S.L."/>
            <person name="Sandelin A."/>
            <person name="Schneider C."/>
            <person name="Schoenbach C."/>
            <person name="Sekiguchi K."/>
            <person name="Semple C.A."/>
            <person name="Seno S."/>
            <person name="Sessa L."/>
            <person name="Sheng Y."/>
            <person name="Shibata Y."/>
            <person name="Shimada H."/>
            <person name="Shimada K."/>
            <person name="Silva D."/>
            <person name="Sinclair B."/>
            <person name="Sperling S."/>
            <person name="Stupka E."/>
            <person name="Sugiura K."/>
            <person name="Sultana R."/>
            <person name="Takenaka Y."/>
            <person name="Taki K."/>
            <person name="Tammoja K."/>
            <person name="Tan S.L."/>
            <person name="Tang S."/>
            <person name="Taylor M.S."/>
            <person name="Tegner J."/>
            <person name="Teichmann S.A."/>
            <person name="Ueda H.R."/>
            <person name="van Nimwegen E."/>
            <person name="Verardo R."/>
            <person name="Wei C.L."/>
            <person name="Yagi K."/>
            <person name="Yamanishi H."/>
            <person name="Zabarovsky E."/>
            <person name="Zhu S."/>
            <person name="Zimmer A."/>
            <person name="Hide W."/>
            <person name="Bult C."/>
            <person name="Grimmond S.M."/>
            <person name="Teasdale R.D."/>
            <person name="Liu E.T."/>
            <person name="Brusic V."/>
            <person name="Quackenbush J."/>
            <person name="Wahlestedt C."/>
            <person name="Mattick J.S."/>
            <person name="Hume D.A."/>
            <person name="Kai C."/>
            <person name="Sasaki D."/>
            <person name="Tomaru Y."/>
            <person name="Fukuda S."/>
            <person name="Kanamori-Katayama M."/>
            <person name="Suzuki M."/>
            <person name="Aoki J."/>
            <person name="Arakawa T."/>
            <person name="Iida J."/>
            <person name="Imamura K."/>
            <person name="Itoh M."/>
            <person name="Kato T."/>
            <person name="Kawaji H."/>
            <person name="Kawagashira N."/>
            <person name="Kawashima T."/>
            <person name="Kojima M."/>
            <person name="Kondo S."/>
            <person name="Konno H."/>
            <person name="Nakano K."/>
            <person name="Ninomiya N."/>
            <person name="Nishio T."/>
            <person name="Okada M."/>
            <person name="Plessy C."/>
            <person name="Shibata K."/>
            <person name="Shiraki T."/>
            <person name="Suzuki S."/>
            <person name="Tagami M."/>
            <person name="Waki K."/>
            <person name="Watahiki A."/>
            <person name="Okamura-Oho Y."/>
            <person name="Suzuki H."/>
            <person name="Kawai J."/>
            <person name="Hayashizaki Y."/>
        </authorList>
    </citation>
    <scope>NUCLEOTIDE SEQUENCE [LARGE SCALE MRNA] OF 129-1004 (ISOFORM 1)</scope>
</reference>
<feature type="chain" id="PRO_0000286337" description="NACHT, LRR and PYD domains-containing protein 9C">
    <location>
        <begin position="1"/>
        <end position="1004"/>
    </location>
</feature>
<feature type="domain" description="Pyrin" evidence="2">
    <location>
        <begin position="1"/>
        <end position="92"/>
    </location>
</feature>
<feature type="domain" description="NACHT" evidence="3">
    <location>
        <begin position="143"/>
        <end position="465"/>
    </location>
</feature>
<feature type="repeat" description="LRR 1">
    <location>
        <begin position="750"/>
        <end position="770"/>
    </location>
</feature>
<feature type="repeat" description="LRR 2">
    <location>
        <begin position="779"/>
        <end position="800"/>
    </location>
</feature>
<feature type="repeat" description="LRR 3">
    <location>
        <begin position="807"/>
        <end position="828"/>
    </location>
</feature>
<feature type="repeat" description="LRR 4">
    <location>
        <begin position="836"/>
        <end position="857"/>
    </location>
</feature>
<feature type="repeat" description="LRR 5">
    <location>
        <begin position="864"/>
        <end position="884"/>
    </location>
</feature>
<feature type="binding site" evidence="3">
    <location>
        <begin position="149"/>
        <end position="156"/>
    </location>
    <ligand>
        <name>ATP</name>
        <dbReference type="ChEBI" id="CHEBI:30616"/>
    </ligand>
</feature>
<feature type="splice variant" id="VSP_025027" description="In isoform 2." evidence="5">
    <location>
        <begin position="619"/>
        <end position="673"/>
    </location>
</feature>
<feature type="splice variant" id="VSP_025028" description="In isoform 2." evidence="5">
    <location>
        <begin position="843"/>
        <end position="899"/>
    </location>
</feature>
<feature type="splice variant" id="VSP_025029" description="In isoform 2." evidence="5">
    <original>LDKSSFSEESQTFLQAVEKKNNNLNVLHFPWVEDELKKRGVRLVWNSKN</original>
    <variation>QVTFIRTRINAVRLLVLRQQYHALKDQDPVIEE</variation>
    <location>
        <begin position="956"/>
        <end position="1004"/>
    </location>
</feature>
<feature type="sequence conflict" description="In Ref. 3; BAE26430." evidence="6" ref="3">
    <original>H</original>
    <variation>Y</variation>
    <location>
        <position position="479"/>
    </location>
</feature>
<feature type="sequence conflict" description="In Ref. 3; BAE26430." evidence="6" ref="3">
    <original>F</original>
    <variation>S</variation>
    <location>
        <position position="968"/>
    </location>
</feature>
<protein>
    <recommendedName>
        <fullName>NACHT, LRR and PYD domains-containing protein 9C</fullName>
    </recommendedName>
    <alternativeName>
        <fullName>NALP-zeta</fullName>
    </alternativeName>
</protein>
<proteinExistence type="evidence at transcript level"/>
<organism>
    <name type="scientific">Mus musculus</name>
    <name type="common">Mouse</name>
    <dbReference type="NCBI Taxonomy" id="10090"/>
    <lineage>
        <taxon>Eukaryota</taxon>
        <taxon>Metazoa</taxon>
        <taxon>Chordata</taxon>
        <taxon>Craniata</taxon>
        <taxon>Vertebrata</taxon>
        <taxon>Euteleostomi</taxon>
        <taxon>Mammalia</taxon>
        <taxon>Eutheria</taxon>
        <taxon>Euarchontoglires</taxon>
        <taxon>Glires</taxon>
        <taxon>Rodentia</taxon>
        <taxon>Myomorpha</taxon>
        <taxon>Muroidea</taxon>
        <taxon>Muridae</taxon>
        <taxon>Murinae</taxon>
        <taxon>Mus</taxon>
        <taxon>Mus</taxon>
    </lineage>
</organism>
<sequence>MVDSSSYGLLQYFQKLSDEEFQRFKELLQKEQEKFKLKPLSWTKIKNTSKEDLVTQLYTHYPRQVWDMVLNLFLQVNRKDLSTMAQIERRDKQNKYKEFMKNLFQYIWTSETNTYMPDRSYNTIIDRQYKALLDIFDSESDPATAVVLGTRGKGKTVFLRKAMLDWASGVLLQNRFQYVFFFSVFSLNNTTELSLAELISSKLPECSETLDDILSNPKRILFVLDGFDYLKFDLELRTNLCNDWRKRLPTQNVLSSLLQKIMLPECSLLLELGESSCSKIIPLLQNPREIIMSGLSEQSIYFYCVSFFKIQLGVEVFKDLKKNEPLFTLCSNPSMLWMICSSLMWGHYSREEVISSSESTSAIHTIFIMSAFKSIFGLGSSKYKRFKLKTLCTLAVEGMWKQVYVFDSEDLRRNKISESDKTVWLKMKFLQIQGNNIMFYHSTLQWYFATLFYFLKQDKDTYHPVIGSLPQLLGEIYAHKQNQWTHAQTFFFGIATKHVITLLKPCFGNISFKTIRQEIIRYLKSLSQPECNEKLVHPKKLFFCLIENQEERFVSQVMNLFEEITVDISDSDDLGAAEYSLLRASKLKNLHLHIQKKVFSEIHDPEYGSLENFKLDQKFSAINWTMLSILFCNLHVLDLGSCHFNKKVIEVLCNSLSPTPNMPLTVFKLQRLLCSFMTNFGDGSLFCTFLQIPQLKYLNLYGTDLSNDVVEMLCSALKCSTCRVEELLLGKCDISSEACGIMATFLINSKVKHLSLVENPLKNKGVMFLCKMLKDPSCVLESLMLSYCCLTFIACGHLYEALLSNKHLSLLDLGSNFLEDIGVNLLCEALKYPNCTLKELWLPGCYLTSECCEEISAVLTCNKNLKTLKLGNNNIQDTGVKRLCEALCHPKCKVQCLGLDMCELSNDCCEDLALALITCNTLKSLNLDWNALHHSGLVMLCEALNHKKCKLNMLGLDKSSFSEESQTFLQAVEKKNNNLNVLHFPWVEDELKKRGVRLVWNSKN</sequence>
<evidence type="ECO:0000250" key="1">
    <source>
        <dbReference type="UniProtKB" id="Q66X22"/>
    </source>
</evidence>
<evidence type="ECO:0000255" key="2">
    <source>
        <dbReference type="PROSITE-ProRule" id="PRU00061"/>
    </source>
</evidence>
<evidence type="ECO:0000255" key="3">
    <source>
        <dbReference type="PROSITE-ProRule" id="PRU00136"/>
    </source>
</evidence>
<evidence type="ECO:0000269" key="4">
    <source>
    </source>
</evidence>
<evidence type="ECO:0000303" key="5">
    <source ref="2"/>
</evidence>
<evidence type="ECO:0000305" key="6"/>
<name>NLR9C_MOUSE</name>
<keyword id="KW-0025">Alternative splicing</keyword>
<keyword id="KW-0067">ATP-binding</keyword>
<keyword id="KW-0963">Cytoplasm</keyword>
<keyword id="KW-0391">Immunity</keyword>
<keyword id="KW-0395">Inflammatory response</keyword>
<keyword id="KW-0399">Innate immunity</keyword>
<keyword id="KW-0433">Leucine-rich repeat</keyword>
<keyword id="KW-0547">Nucleotide-binding</keyword>
<keyword id="KW-1185">Reference proteome</keyword>
<keyword id="KW-0677">Repeat</keyword>
<comment type="function">
    <text evidence="6">May be involved in inflammation.</text>
</comment>
<comment type="subcellular location">
    <subcellularLocation>
        <location evidence="1">Cytoplasm</location>
    </subcellularLocation>
</comment>
<comment type="alternative products">
    <event type="alternative splicing"/>
    <isoform>
        <id>Q66X01-1</id>
        <name>1</name>
        <sequence type="displayed"/>
    </isoform>
    <isoform>
        <id>Q66X01-2</id>
        <name>2</name>
        <sequence type="described" ref="VSP_025027 VSP_025028 VSP_025029"/>
    </isoform>
</comment>
<comment type="tissue specificity">
    <text evidence="4">Oocyte specific.</text>
</comment>
<comment type="similarity">
    <text evidence="6">Belongs to the NLRP family.</text>
</comment>
<accession>Q66X01</accession>
<accession>Q3ULL8</accession>
<accession>Q6UTW8</accession>
<gene>
    <name type="primary">Nlrp9c</name>
    <name type="synonym">Nalp9c</name>
</gene>